<gene>
    <name type="primary">PHB2</name>
</gene>
<reference key="1">
    <citation type="submission" date="2006-02" db="EMBL/GenBank/DDBJ databases">
        <authorList>
            <consortium name="NIH - Mammalian Gene Collection (MGC) project"/>
        </authorList>
    </citation>
    <scope>NUCLEOTIDE SEQUENCE [LARGE SCALE MRNA]</scope>
    <source>
        <strain>Hereford</strain>
        <tissue>Uterus</tissue>
    </source>
</reference>
<sequence>MAQNLKDLAGRLPSGPRGMGTALKLLLGAGAVAYGIRESVFTVEGGHRAIFFNRIGGVQQDTILAEGLHFRIPWFQYPIIYDIRARPRKISSPTGSKDLQMVNISLRVLSRPNAMELPSMYQRLGLDYEERVLPSIVNEVLKSVVAKFNASQLITQRAQVSLLIRRELTERAKDFSLILDDVAITELSFSREYTAAVEAKQVAQQEAQRAQFLVEKAKQEQRQKIVQAEGEAEAARMLGEALSKNPGYIKLRKIRAAQNISKTIATSQNRIYLTADNLVLNLQDESFTRGSDSLIKGKK</sequence>
<accession>Q2HJ97</accession>
<proteinExistence type="evidence at transcript level"/>
<name>PHB2_BOVIN</name>
<dbReference type="EMBL" id="BC113241">
    <property type="protein sequence ID" value="AAI13242.1"/>
    <property type="molecule type" value="mRNA"/>
</dbReference>
<dbReference type="RefSeq" id="NP_001039663.1">
    <property type="nucleotide sequence ID" value="NM_001046198.1"/>
</dbReference>
<dbReference type="SMR" id="Q2HJ97"/>
<dbReference type="FunCoup" id="Q2HJ97">
    <property type="interactions" value="2955"/>
</dbReference>
<dbReference type="STRING" id="9913.ENSBTAP00000069758"/>
<dbReference type="PaxDb" id="9913-ENSBTAP00000017442"/>
<dbReference type="PeptideAtlas" id="Q2HJ97"/>
<dbReference type="Ensembl" id="ENSBTAT00000104292.1">
    <property type="protein sequence ID" value="ENSBTAP00000077087.1"/>
    <property type="gene ID" value="ENSBTAG00000013123.5"/>
</dbReference>
<dbReference type="GeneID" id="515363"/>
<dbReference type="KEGG" id="bta:515363"/>
<dbReference type="CTD" id="11331"/>
<dbReference type="VEuPathDB" id="HostDB:ENSBTAG00000013123"/>
<dbReference type="VGNC" id="VGNC:32809">
    <property type="gene designation" value="PHB2"/>
</dbReference>
<dbReference type="eggNOG" id="KOG3090">
    <property type="taxonomic scope" value="Eukaryota"/>
</dbReference>
<dbReference type="GeneTree" id="ENSGT00950000183070"/>
<dbReference type="HOGENOM" id="CLU_047969_0_2_1"/>
<dbReference type="InParanoid" id="Q2HJ97"/>
<dbReference type="OMA" id="NEGTHFQ"/>
<dbReference type="OrthoDB" id="275637at2759"/>
<dbReference type="TreeFam" id="TF354230"/>
<dbReference type="Reactome" id="R-BTA-8949664">
    <property type="pathway name" value="Processing of SMDT1"/>
</dbReference>
<dbReference type="Reactome" id="R-BTA-9840373">
    <property type="pathway name" value="Cellular response to mitochondrial stress"/>
</dbReference>
<dbReference type="Proteomes" id="UP000009136">
    <property type="component" value="Chromosome 5"/>
</dbReference>
<dbReference type="Bgee" id="ENSBTAG00000013123">
    <property type="expression patterns" value="Expressed in digestive system secreted substance and 106 other cell types or tissues"/>
</dbReference>
<dbReference type="GO" id="GO:0009986">
    <property type="term" value="C:cell surface"/>
    <property type="evidence" value="ECO:0000250"/>
    <property type="project" value="UniProtKB"/>
</dbReference>
<dbReference type="GO" id="GO:0005737">
    <property type="term" value="C:cytoplasm"/>
    <property type="evidence" value="ECO:0000250"/>
    <property type="project" value="UniProtKB"/>
</dbReference>
<dbReference type="GO" id="GO:0098800">
    <property type="term" value="C:inner mitochondrial membrane protein complex"/>
    <property type="evidence" value="ECO:0000250"/>
    <property type="project" value="UniProtKB"/>
</dbReference>
<dbReference type="GO" id="GO:0005743">
    <property type="term" value="C:mitochondrial inner membrane"/>
    <property type="evidence" value="ECO:0000250"/>
    <property type="project" value="UniProtKB"/>
</dbReference>
<dbReference type="GO" id="GO:0035632">
    <property type="term" value="C:mitochondrial prohibitin complex"/>
    <property type="evidence" value="ECO:0000250"/>
    <property type="project" value="UniProtKB"/>
</dbReference>
<dbReference type="GO" id="GO:0005739">
    <property type="term" value="C:mitochondrion"/>
    <property type="evidence" value="ECO:0000318"/>
    <property type="project" value="GO_Central"/>
</dbReference>
<dbReference type="GO" id="GO:0016363">
    <property type="term" value="C:nuclear matrix"/>
    <property type="evidence" value="ECO:0000250"/>
    <property type="project" value="UniProtKB"/>
</dbReference>
<dbReference type="GO" id="GO:0005634">
    <property type="term" value="C:nucleus"/>
    <property type="evidence" value="ECO:0000250"/>
    <property type="project" value="UniProtKB"/>
</dbReference>
<dbReference type="GO" id="GO:0005886">
    <property type="term" value="C:plasma membrane"/>
    <property type="evidence" value="ECO:0000250"/>
    <property type="project" value="UniProtKB"/>
</dbReference>
<dbReference type="GO" id="GO:0032991">
    <property type="term" value="C:protein-containing complex"/>
    <property type="evidence" value="ECO:0000250"/>
    <property type="project" value="UniProtKB"/>
</dbReference>
<dbReference type="GO" id="GO:0042803">
    <property type="term" value="F:protein homodimerization activity"/>
    <property type="evidence" value="ECO:0000250"/>
    <property type="project" value="UniProtKB"/>
</dbReference>
<dbReference type="GO" id="GO:0046625">
    <property type="term" value="F:sphingolipid binding"/>
    <property type="evidence" value="ECO:0000250"/>
    <property type="project" value="UniProtKB"/>
</dbReference>
<dbReference type="GO" id="GO:0042113">
    <property type="term" value="P:B cell activation"/>
    <property type="evidence" value="ECO:0000250"/>
    <property type="project" value="UniProtKB"/>
</dbReference>
<dbReference type="GO" id="GO:0016477">
    <property type="term" value="P:cell migration"/>
    <property type="evidence" value="ECO:0000250"/>
    <property type="project" value="UniProtKB"/>
</dbReference>
<dbReference type="GO" id="GO:0007005">
    <property type="term" value="P:mitochondrion organization"/>
    <property type="evidence" value="ECO:0000318"/>
    <property type="project" value="GO_Central"/>
</dbReference>
<dbReference type="GO" id="GO:0000423">
    <property type="term" value="P:mitophagy"/>
    <property type="evidence" value="ECO:0000250"/>
    <property type="project" value="UniProtKB"/>
</dbReference>
<dbReference type="GO" id="GO:0002639">
    <property type="term" value="P:positive regulation of immunoglobulin production"/>
    <property type="evidence" value="ECO:0000250"/>
    <property type="project" value="UniProtKB"/>
</dbReference>
<dbReference type="GO" id="GO:1901224">
    <property type="term" value="P:positive regulation of non-canonical NF-kappaB signal transduction"/>
    <property type="evidence" value="ECO:0000250"/>
    <property type="project" value="UniProtKB"/>
</dbReference>
<dbReference type="GO" id="GO:1900208">
    <property type="term" value="P:regulation of cardiolipin metabolic process"/>
    <property type="evidence" value="ECO:0000250"/>
    <property type="project" value="UniProtKB"/>
</dbReference>
<dbReference type="GO" id="GO:1904959">
    <property type="term" value="P:regulation of cytochrome-c oxidase activity"/>
    <property type="evidence" value="ECO:0000250"/>
    <property type="project" value="UniProtKB"/>
</dbReference>
<dbReference type="CDD" id="cd03401">
    <property type="entry name" value="SPFH_prohibitin"/>
    <property type="match status" value="1"/>
</dbReference>
<dbReference type="FunFam" id="3.30.479.30:FF:000001">
    <property type="entry name" value="Prohibitin 2"/>
    <property type="match status" value="1"/>
</dbReference>
<dbReference type="Gene3D" id="3.30.479.30">
    <property type="entry name" value="Band 7 domain"/>
    <property type="match status" value="1"/>
</dbReference>
<dbReference type="InterPro" id="IPR001107">
    <property type="entry name" value="Band_7"/>
</dbReference>
<dbReference type="InterPro" id="IPR036013">
    <property type="entry name" value="Band_7/SPFH_dom_sf"/>
</dbReference>
<dbReference type="InterPro" id="IPR000163">
    <property type="entry name" value="Prohibitin"/>
</dbReference>
<dbReference type="PANTHER" id="PTHR23222">
    <property type="entry name" value="PROHIBITIN"/>
    <property type="match status" value="1"/>
</dbReference>
<dbReference type="PANTHER" id="PTHR23222:SF1">
    <property type="entry name" value="PROHIBITIN-2"/>
    <property type="match status" value="1"/>
</dbReference>
<dbReference type="Pfam" id="PF01145">
    <property type="entry name" value="Band_7"/>
    <property type="match status" value="1"/>
</dbReference>
<dbReference type="PRINTS" id="PR00679">
    <property type="entry name" value="PROHIBITIN"/>
</dbReference>
<dbReference type="SMART" id="SM00244">
    <property type="entry name" value="PHB"/>
    <property type="match status" value="1"/>
</dbReference>
<dbReference type="SUPFAM" id="SSF117892">
    <property type="entry name" value="Band 7/SPFH domain"/>
    <property type="match status" value="1"/>
</dbReference>
<keyword id="KW-0007">Acetylation</keyword>
<keyword id="KW-1003">Cell membrane</keyword>
<keyword id="KW-0175">Coiled coil</keyword>
<keyword id="KW-0963">Cytoplasm</keyword>
<keyword id="KW-0472">Membrane</keyword>
<keyword id="KW-0496">Mitochondrion</keyword>
<keyword id="KW-0999">Mitochondrion inner membrane</keyword>
<keyword id="KW-0539">Nucleus</keyword>
<keyword id="KW-0597">Phosphoprotein</keyword>
<keyword id="KW-0675">Receptor</keyword>
<keyword id="KW-1185">Reference proteome</keyword>
<keyword id="KW-0678">Repressor</keyword>
<keyword id="KW-0804">Transcription</keyword>
<keyword id="KW-0805">Transcription regulation</keyword>
<evidence type="ECO:0000250" key="1"/>
<evidence type="ECO:0000250" key="2">
    <source>
        <dbReference type="UniProtKB" id="O35129"/>
    </source>
</evidence>
<evidence type="ECO:0000250" key="3">
    <source>
        <dbReference type="UniProtKB" id="Q99623"/>
    </source>
</evidence>
<evidence type="ECO:0000255" key="4"/>
<evidence type="ECO:0000305" key="5"/>
<feature type="initiator methionine" description="Removed" evidence="3">
    <location>
        <position position="1"/>
    </location>
</feature>
<feature type="chain" id="PRO_0000244434" description="Prohibitin-2">
    <location>
        <begin position="2"/>
        <end position="299"/>
    </location>
</feature>
<feature type="region of interest" description="Necessary for transcriptional repression" evidence="1">
    <location>
        <begin position="19"/>
        <end position="49"/>
    </location>
</feature>
<feature type="region of interest" description="Necessary for transcriptional repression" evidence="1">
    <location>
        <begin position="150"/>
        <end position="174"/>
    </location>
</feature>
<feature type="coiled-coil region" evidence="4">
    <location>
        <begin position="190"/>
        <end position="238"/>
    </location>
</feature>
<feature type="modified residue" description="N-acetylalanine" evidence="3">
    <location>
        <position position="2"/>
    </location>
</feature>
<feature type="modified residue" description="Phosphotyrosine" evidence="3">
    <location>
        <position position="128"/>
    </location>
</feature>
<feature type="modified residue" description="N6-acetyllysine" evidence="2">
    <location>
        <position position="147"/>
    </location>
</feature>
<feature type="modified residue" description="Phosphoserine" evidence="3">
    <location>
        <position position="151"/>
    </location>
</feature>
<feature type="modified residue" description="N6-acetyllysine" evidence="2">
    <location>
        <position position="200"/>
    </location>
</feature>
<feature type="modified residue" description="N6-acetyllysine" evidence="3">
    <location>
        <position position="250"/>
    </location>
</feature>
<feature type="modified residue" description="N6-acetyllysine" evidence="2">
    <location>
        <position position="262"/>
    </location>
</feature>
<organism>
    <name type="scientific">Bos taurus</name>
    <name type="common">Bovine</name>
    <dbReference type="NCBI Taxonomy" id="9913"/>
    <lineage>
        <taxon>Eukaryota</taxon>
        <taxon>Metazoa</taxon>
        <taxon>Chordata</taxon>
        <taxon>Craniata</taxon>
        <taxon>Vertebrata</taxon>
        <taxon>Euteleostomi</taxon>
        <taxon>Mammalia</taxon>
        <taxon>Eutheria</taxon>
        <taxon>Laurasiatheria</taxon>
        <taxon>Artiodactyla</taxon>
        <taxon>Ruminantia</taxon>
        <taxon>Pecora</taxon>
        <taxon>Bovidae</taxon>
        <taxon>Bovinae</taxon>
        <taxon>Bos</taxon>
    </lineage>
</organism>
<protein>
    <recommendedName>
        <fullName>Prohibitin-2</fullName>
    </recommendedName>
</protein>
<comment type="function">
    <text evidence="2">Protein with pleiotropic attributes mediated in a cell-compartment- and tissue-specific manner, which include the plasma membrane-associated cell signaling functions, mitochondrial chaperone, and transcriptional co-regulator of transcription factors and sex steroid hormones in the nucleus.</text>
</comment>
<comment type="function">
    <text evidence="2">In the mitochondria, together with PHB, forms large ring complexes (prohibitin complexes) in the inner mitochondrial membrane (IMM) and functions as a chaperone protein that stabilizes mitochondrial respiratory enzymes and maintains mitochondrial integrity in the IMM, which is required for mitochondrial morphogenesis, neuronal survival, and normal lifespan. The prohibitin complex, with DNAJC19, regulates cardiolipin remodeling and the protein turnover of OMA1 in a cardiolipin-binding manner. Also regulates cytochrome-c oxidase assembly (COX) and mitochondrial respiration. Binding to sphingoid 1-phosphate (SPP) modulates its regulator activity. Has a key role of mitophagy receptor involved in targeting mitochondria for autophagic degradation. Involved in mitochondrial-mediated antiviral innate immunity, activates RIG-I-mediated signal transduction and production of IFNB1 and pro-inflammatory cytokine IL6.</text>
</comment>
<comment type="function">
    <text evidence="2">In the nucleus, serves as transcriptional co-regulator. Acts as a mediator of transcriptional repression by nuclear hormone receptors via recruitment of histone deacetylases. Functions as an estrogen receptor (ER)-selective coregulator that potentiates the inhibitory activities of antiestrogens and represses the activity of estrogens. Competes with NCOA1 for modulation of ER transcriptional activity.</text>
</comment>
<comment type="function">
    <text evidence="2 3">In the plasma membrane, is involved in IGFBP6-induced cell migration (By similarity). Cooperates with CD86 to mediate CD86-signaling in B lymphocytes that regulates the level of IgG1 produced through the activation of distal signaling intermediates. Upon CD40 engagement, required to activate NF-kappa-B signaling pathway via phospholipase C and protein kinase C activation (By similarity).</text>
</comment>
<comment type="subunit">
    <text evidence="2 3">The mitochondrial prohibitin complex consists of two subunits (PHB1 and PHB2), assembled into a membrane-associated ring-shaped supercomplex of approximately 1 mDa. Interacts with ESR1, HDAC1 and HDAC5 (By similarity). Interacts with ZNF703. Interacts with STOML2. Interacts with ARFGEF3 (By similarity). Interacts with SPHK2. Interacts with COX4I1; the interaction associates PHB2 with COX (By similarity). Interacts with MAP1LC3B (membrane-bound form LC3-II); the interaction is direct and upon mitochondrial depolarization and proteasome-dependent outer membrane rupture. Interacts with IGFBP6 (via C-terminal domain). Interacts with CLPB (By similarity). Interacts with CD86 (via cytoplasmic domain); the interactions increases after priming with CD40. Interacts with AFG3L2. Interacts with DNAJC19 (By similarity). Interacts with AKT2; this interaction may be important for myogenic differentiation (By similarity).</text>
</comment>
<comment type="subcellular location">
    <subcellularLocation>
        <location evidence="2">Mitochondrion inner membrane</location>
    </subcellularLocation>
    <subcellularLocation>
        <location evidence="2">Cytoplasm</location>
    </subcellularLocation>
    <subcellularLocation>
        <location evidence="2">Nucleus</location>
    </subcellularLocation>
    <subcellularLocation>
        <location evidence="3">Cell membrane</location>
    </subcellularLocation>
</comment>
<comment type="domain">
    <text evidence="3">LC3-interaction region (LIR) is required for interaction with MAP1LC3B/LC3-II and for Parkin-mediated mitophagy.</text>
</comment>
<comment type="PTM">
    <text evidence="3">Phosphorylated. Tyrosine phosphorylation is indirectly stimulated by IGFBP6.</text>
</comment>
<comment type="similarity">
    <text evidence="5">Belongs to the prohibitin family.</text>
</comment>